<evidence type="ECO:0000255" key="1">
    <source>
        <dbReference type="HAMAP-Rule" id="MF_01839"/>
    </source>
</evidence>
<protein>
    <recommendedName>
        <fullName evidence="1">Nucleoid occlusion factor SlmA</fullName>
    </recommendedName>
</protein>
<name>SLMA_SALG2</name>
<dbReference type="EMBL" id="AM933173">
    <property type="protein sequence ID" value="CAR39479.1"/>
    <property type="molecule type" value="Genomic_DNA"/>
</dbReference>
<dbReference type="RefSeq" id="WP_000818607.1">
    <property type="nucleotide sequence ID" value="NC_011274.1"/>
</dbReference>
<dbReference type="SMR" id="B5RGE6"/>
<dbReference type="KEGG" id="seg:SG3699"/>
<dbReference type="HOGENOM" id="CLU_069356_5_0_6"/>
<dbReference type="Proteomes" id="UP000008321">
    <property type="component" value="Chromosome"/>
</dbReference>
<dbReference type="GO" id="GO:0043590">
    <property type="term" value="C:bacterial nucleoid"/>
    <property type="evidence" value="ECO:0007669"/>
    <property type="project" value="UniProtKB-UniRule"/>
</dbReference>
<dbReference type="GO" id="GO:0005737">
    <property type="term" value="C:cytoplasm"/>
    <property type="evidence" value="ECO:0007669"/>
    <property type="project" value="UniProtKB-UniRule"/>
</dbReference>
<dbReference type="GO" id="GO:0003700">
    <property type="term" value="F:DNA-binding transcription factor activity"/>
    <property type="evidence" value="ECO:0007669"/>
    <property type="project" value="TreeGrafter"/>
</dbReference>
<dbReference type="GO" id="GO:0000976">
    <property type="term" value="F:transcription cis-regulatory region binding"/>
    <property type="evidence" value="ECO:0007669"/>
    <property type="project" value="TreeGrafter"/>
</dbReference>
<dbReference type="GO" id="GO:0051301">
    <property type="term" value="P:cell division"/>
    <property type="evidence" value="ECO:0007669"/>
    <property type="project" value="UniProtKB-KW"/>
</dbReference>
<dbReference type="GO" id="GO:0010974">
    <property type="term" value="P:negative regulation of division septum assembly"/>
    <property type="evidence" value="ECO:0007669"/>
    <property type="project" value="InterPro"/>
</dbReference>
<dbReference type="FunFam" id="1.10.357.10:FF:000002">
    <property type="entry name" value="Nucleoid occlusion factor SlmA"/>
    <property type="match status" value="1"/>
</dbReference>
<dbReference type="Gene3D" id="1.10.357.10">
    <property type="entry name" value="Tetracycline Repressor, domain 2"/>
    <property type="match status" value="1"/>
</dbReference>
<dbReference type="HAMAP" id="MF_01839">
    <property type="entry name" value="NO_factor_SlmA"/>
    <property type="match status" value="1"/>
</dbReference>
<dbReference type="InterPro" id="IPR023772">
    <property type="entry name" value="DNA-bd_HTH_TetR-type_CS"/>
</dbReference>
<dbReference type="InterPro" id="IPR009057">
    <property type="entry name" value="Homeodomain-like_sf"/>
</dbReference>
<dbReference type="InterPro" id="IPR050109">
    <property type="entry name" value="HTH-type_TetR-like_transc_reg"/>
</dbReference>
<dbReference type="InterPro" id="IPR001647">
    <property type="entry name" value="HTH_TetR"/>
</dbReference>
<dbReference type="InterPro" id="IPR023769">
    <property type="entry name" value="NO_SlmA"/>
</dbReference>
<dbReference type="InterPro" id="IPR054580">
    <property type="entry name" value="SlmA-like_C"/>
</dbReference>
<dbReference type="InterPro" id="IPR036271">
    <property type="entry name" value="Tet_transcr_reg_TetR-rel_C_sf"/>
</dbReference>
<dbReference type="NCBIfam" id="NF007015">
    <property type="entry name" value="PRK09480.1"/>
    <property type="match status" value="1"/>
</dbReference>
<dbReference type="PANTHER" id="PTHR30055">
    <property type="entry name" value="HTH-TYPE TRANSCRIPTIONAL REGULATOR RUTR"/>
    <property type="match status" value="1"/>
</dbReference>
<dbReference type="PANTHER" id="PTHR30055:SF183">
    <property type="entry name" value="NUCLEOID OCCLUSION FACTOR SLMA"/>
    <property type="match status" value="1"/>
</dbReference>
<dbReference type="Pfam" id="PF22276">
    <property type="entry name" value="SlmA-like_C"/>
    <property type="match status" value="1"/>
</dbReference>
<dbReference type="Pfam" id="PF00440">
    <property type="entry name" value="TetR_N"/>
    <property type="match status" value="1"/>
</dbReference>
<dbReference type="SUPFAM" id="SSF46689">
    <property type="entry name" value="Homeodomain-like"/>
    <property type="match status" value="1"/>
</dbReference>
<dbReference type="SUPFAM" id="SSF48498">
    <property type="entry name" value="Tetracyclin repressor-like, C-terminal domain"/>
    <property type="match status" value="1"/>
</dbReference>
<dbReference type="PROSITE" id="PS01081">
    <property type="entry name" value="HTH_TETR_1"/>
    <property type="match status" value="1"/>
</dbReference>
<dbReference type="PROSITE" id="PS50977">
    <property type="entry name" value="HTH_TETR_2"/>
    <property type="match status" value="1"/>
</dbReference>
<organism>
    <name type="scientific">Salmonella gallinarum (strain 287/91 / NCTC 13346)</name>
    <dbReference type="NCBI Taxonomy" id="550538"/>
    <lineage>
        <taxon>Bacteria</taxon>
        <taxon>Pseudomonadati</taxon>
        <taxon>Pseudomonadota</taxon>
        <taxon>Gammaproteobacteria</taxon>
        <taxon>Enterobacterales</taxon>
        <taxon>Enterobacteriaceae</taxon>
        <taxon>Salmonella</taxon>
    </lineage>
</organism>
<accession>B5RGE6</accession>
<comment type="function">
    <text evidence="1">Required for nucleoid occlusion (NO) phenomenon, which prevents Z-ring formation and cell division over the nucleoid. Acts as a DNA-associated cell division inhibitor that binds simultaneously chromosomal DNA and FtsZ, and disrupts the assembly of FtsZ polymers. SlmA-DNA-binding sequences (SBS) are dispersed on non-Ter regions of the chromosome, preventing FtsZ polymerization at these regions.</text>
</comment>
<comment type="subunit">
    <text evidence="1">Homodimer. Interacts with FtsZ.</text>
</comment>
<comment type="subcellular location">
    <subcellularLocation>
        <location evidence="1">Cytoplasm</location>
        <location evidence="1">Nucleoid</location>
    </subcellularLocation>
</comment>
<comment type="similarity">
    <text evidence="1">Belongs to the nucleoid occlusion factor SlmA family.</text>
</comment>
<feature type="chain" id="PRO_1000188396" description="Nucleoid occlusion factor SlmA">
    <location>
        <begin position="1"/>
        <end position="198"/>
    </location>
</feature>
<feature type="domain" description="HTH tetR-type" evidence="1">
    <location>
        <begin position="10"/>
        <end position="70"/>
    </location>
</feature>
<feature type="DNA-binding region" description="H-T-H motif" evidence="1">
    <location>
        <begin position="33"/>
        <end position="52"/>
    </location>
</feature>
<feature type="coiled-coil region" evidence="1">
    <location>
        <begin position="117"/>
        <end position="144"/>
    </location>
</feature>
<reference key="1">
    <citation type="journal article" date="2008" name="Genome Res.">
        <title>Comparative genome analysis of Salmonella enteritidis PT4 and Salmonella gallinarum 287/91 provides insights into evolutionary and host adaptation pathways.</title>
        <authorList>
            <person name="Thomson N.R."/>
            <person name="Clayton D.J."/>
            <person name="Windhorst D."/>
            <person name="Vernikos G."/>
            <person name="Davidson S."/>
            <person name="Churcher C."/>
            <person name="Quail M.A."/>
            <person name="Stevens M."/>
            <person name="Jones M.A."/>
            <person name="Watson M."/>
            <person name="Barron A."/>
            <person name="Layton A."/>
            <person name="Pickard D."/>
            <person name="Kingsley R.A."/>
            <person name="Bignell A."/>
            <person name="Clark L."/>
            <person name="Harris B."/>
            <person name="Ormond D."/>
            <person name="Abdellah Z."/>
            <person name="Brooks K."/>
            <person name="Cherevach I."/>
            <person name="Chillingworth T."/>
            <person name="Woodward J."/>
            <person name="Norberczak H."/>
            <person name="Lord A."/>
            <person name="Arrowsmith C."/>
            <person name="Jagels K."/>
            <person name="Moule S."/>
            <person name="Mungall K."/>
            <person name="Saunders M."/>
            <person name="Whitehead S."/>
            <person name="Chabalgoity J.A."/>
            <person name="Maskell D."/>
            <person name="Humphreys T."/>
            <person name="Roberts M."/>
            <person name="Barrow P.A."/>
            <person name="Dougan G."/>
            <person name="Parkhill J."/>
        </authorList>
    </citation>
    <scope>NUCLEOTIDE SEQUENCE [LARGE SCALE GENOMIC DNA]</scope>
    <source>
        <strain>287/91 / NCTC 13346</strain>
    </source>
</reference>
<keyword id="KW-0131">Cell cycle</keyword>
<keyword id="KW-0132">Cell division</keyword>
<keyword id="KW-0175">Coiled coil</keyword>
<keyword id="KW-0963">Cytoplasm</keyword>
<keyword id="KW-0238">DNA-binding</keyword>
<proteinExistence type="inferred from homology"/>
<gene>
    <name evidence="1" type="primary">slmA</name>
    <name type="ordered locus">SG3699</name>
</gene>
<sequence>MAEKQTAKRNRREEILQSLALMLESSDGSQRITTAKLAASVGVSEAALYRHFPSKTRMFDSLIEFIEDSLITRINLILKDEKNTSTRLRLIVLLILGFGERNPGLTRILTGHALMFEQDRLQGRINQLFERIEAQLRQVLREKRMREGEGYTTDENLLASQLLAFCEGMLSRFVRSEFKYRPTDDFDARWPLIAAQLQ</sequence>